<gene>
    <name type="ordered locus">Os01g0954000</name>
    <name type="ordered locus">LOC_Os01g72460</name>
    <name evidence="3" type="ORF">OsJ_04795</name>
    <name type="ORF">P0431G06.30</name>
</gene>
<keyword id="KW-0285">Flavoprotein</keyword>
<keyword id="KW-0288">FMN</keyword>
<keyword id="KW-0520">NAD</keyword>
<keyword id="KW-0521">NADP</keyword>
<keyword id="KW-0560">Oxidoreductase</keyword>
<keyword id="KW-1185">Reference proteome</keyword>
<dbReference type="EC" id="1.6.5.2"/>
<dbReference type="EMBL" id="AP003683">
    <property type="protein sequence ID" value="BAB64710.1"/>
    <property type="molecule type" value="Genomic_DNA"/>
</dbReference>
<dbReference type="EMBL" id="AP008207">
    <property type="protein sequence ID" value="BAF07344.1"/>
    <property type="molecule type" value="Genomic_DNA"/>
</dbReference>
<dbReference type="EMBL" id="AP014957">
    <property type="protein sequence ID" value="BAS76269.1"/>
    <property type="molecule type" value="Genomic_DNA"/>
</dbReference>
<dbReference type="EMBL" id="CM000138">
    <property type="protein sequence ID" value="EAZ14867.1"/>
    <property type="molecule type" value="Genomic_DNA"/>
</dbReference>
<dbReference type="EMBL" id="AK062729">
    <property type="protein sequence ID" value="BAG88425.1"/>
    <property type="molecule type" value="mRNA"/>
</dbReference>
<dbReference type="RefSeq" id="XP_015629376.1">
    <property type="nucleotide sequence ID" value="XM_015773890.1"/>
</dbReference>
<dbReference type="SMR" id="Q941Y8"/>
<dbReference type="FunCoup" id="Q941Y8">
    <property type="interactions" value="6"/>
</dbReference>
<dbReference type="STRING" id="39947.Q941Y8"/>
<dbReference type="PaxDb" id="39947-Q941Y8"/>
<dbReference type="EnsemblPlants" id="Os01t0954000-01">
    <property type="protein sequence ID" value="Os01t0954000-01"/>
    <property type="gene ID" value="Os01g0954000"/>
</dbReference>
<dbReference type="Gramene" id="Os01t0954000-01">
    <property type="protein sequence ID" value="Os01t0954000-01"/>
    <property type="gene ID" value="Os01g0954000"/>
</dbReference>
<dbReference type="KEGG" id="dosa:Os01g0954000"/>
<dbReference type="eggNOG" id="KOG4530">
    <property type="taxonomic scope" value="Eukaryota"/>
</dbReference>
<dbReference type="HOGENOM" id="CLU_055322_4_2_1"/>
<dbReference type="InParanoid" id="Q941Y8"/>
<dbReference type="OMA" id="NYSMAPA"/>
<dbReference type="OrthoDB" id="68575at2759"/>
<dbReference type="Proteomes" id="UP000000763">
    <property type="component" value="Chromosome 1"/>
</dbReference>
<dbReference type="Proteomes" id="UP000007752">
    <property type="component" value="Chromosome 1"/>
</dbReference>
<dbReference type="Proteomes" id="UP000059680">
    <property type="component" value="Chromosome 1"/>
</dbReference>
<dbReference type="GO" id="GO:0005829">
    <property type="term" value="C:cytosol"/>
    <property type="evidence" value="ECO:0000318"/>
    <property type="project" value="GO_Central"/>
</dbReference>
<dbReference type="GO" id="GO:0010181">
    <property type="term" value="F:FMN binding"/>
    <property type="evidence" value="ECO:0000318"/>
    <property type="project" value="GO_Central"/>
</dbReference>
<dbReference type="GO" id="GO:0050136">
    <property type="term" value="F:NADH:ubiquinone reductase (non-electrogenic) activity"/>
    <property type="evidence" value="ECO:0007669"/>
    <property type="project" value="RHEA"/>
</dbReference>
<dbReference type="GO" id="GO:0008753">
    <property type="term" value="F:NADPH dehydrogenase (quinone) activity"/>
    <property type="evidence" value="ECO:0007669"/>
    <property type="project" value="RHEA"/>
</dbReference>
<dbReference type="FunFam" id="3.40.50.360:FF:000031">
    <property type="entry name" value="NADPH:quinone oxidoreductase"/>
    <property type="match status" value="1"/>
</dbReference>
<dbReference type="Gene3D" id="3.40.50.360">
    <property type="match status" value="1"/>
</dbReference>
<dbReference type="InterPro" id="IPR029039">
    <property type="entry name" value="Flavoprotein-like_sf"/>
</dbReference>
<dbReference type="InterPro" id="IPR005025">
    <property type="entry name" value="FMN_Rdtase-like_dom"/>
</dbReference>
<dbReference type="InterPro" id="IPR050712">
    <property type="entry name" value="NAD(P)H-dep_reductase"/>
</dbReference>
<dbReference type="PANTHER" id="PTHR30543">
    <property type="entry name" value="CHROMATE REDUCTASE"/>
    <property type="match status" value="1"/>
</dbReference>
<dbReference type="PANTHER" id="PTHR30543:SF14">
    <property type="entry name" value="NADPH:QUINONE OXIDOREDUCTASE 2-RELATED"/>
    <property type="match status" value="1"/>
</dbReference>
<dbReference type="Pfam" id="PF03358">
    <property type="entry name" value="FMN_red"/>
    <property type="match status" value="1"/>
</dbReference>
<dbReference type="SUPFAM" id="SSF52218">
    <property type="entry name" value="Flavoproteins"/>
    <property type="match status" value="1"/>
</dbReference>
<reference key="1">
    <citation type="journal article" date="2002" name="Nature">
        <title>The genome sequence and structure of rice chromosome 1.</title>
        <authorList>
            <person name="Sasaki T."/>
            <person name="Matsumoto T."/>
            <person name="Yamamoto K."/>
            <person name="Sakata K."/>
            <person name="Baba T."/>
            <person name="Katayose Y."/>
            <person name="Wu J."/>
            <person name="Niimura Y."/>
            <person name="Cheng Z."/>
            <person name="Nagamura Y."/>
            <person name="Antonio B.A."/>
            <person name="Kanamori H."/>
            <person name="Hosokawa S."/>
            <person name="Masukawa M."/>
            <person name="Arikawa K."/>
            <person name="Chiden Y."/>
            <person name="Hayashi M."/>
            <person name="Okamoto M."/>
            <person name="Ando T."/>
            <person name="Aoki H."/>
            <person name="Arita K."/>
            <person name="Hamada M."/>
            <person name="Harada C."/>
            <person name="Hijishita S."/>
            <person name="Honda M."/>
            <person name="Ichikawa Y."/>
            <person name="Idonuma A."/>
            <person name="Iijima M."/>
            <person name="Ikeda M."/>
            <person name="Ikeno M."/>
            <person name="Ito S."/>
            <person name="Ito T."/>
            <person name="Ito Y."/>
            <person name="Ito Y."/>
            <person name="Iwabuchi A."/>
            <person name="Kamiya K."/>
            <person name="Karasawa W."/>
            <person name="Katagiri S."/>
            <person name="Kikuta A."/>
            <person name="Kobayashi N."/>
            <person name="Kono I."/>
            <person name="Machita K."/>
            <person name="Maehara T."/>
            <person name="Mizuno H."/>
            <person name="Mizubayashi T."/>
            <person name="Mukai Y."/>
            <person name="Nagasaki H."/>
            <person name="Nakashima M."/>
            <person name="Nakama Y."/>
            <person name="Nakamichi Y."/>
            <person name="Nakamura M."/>
            <person name="Namiki N."/>
            <person name="Negishi M."/>
            <person name="Ohta I."/>
            <person name="Ono N."/>
            <person name="Saji S."/>
            <person name="Sakai K."/>
            <person name="Shibata M."/>
            <person name="Shimokawa T."/>
            <person name="Shomura A."/>
            <person name="Song J."/>
            <person name="Takazaki Y."/>
            <person name="Terasawa K."/>
            <person name="Tsuji K."/>
            <person name="Waki K."/>
            <person name="Yamagata H."/>
            <person name="Yamane H."/>
            <person name="Yoshiki S."/>
            <person name="Yoshihara R."/>
            <person name="Yukawa K."/>
            <person name="Zhong H."/>
            <person name="Iwama H."/>
            <person name="Endo T."/>
            <person name="Ito H."/>
            <person name="Hahn J.H."/>
            <person name="Kim H.-I."/>
            <person name="Eun M.-Y."/>
            <person name="Yano M."/>
            <person name="Jiang J."/>
            <person name="Gojobori T."/>
        </authorList>
    </citation>
    <scope>NUCLEOTIDE SEQUENCE [LARGE SCALE GENOMIC DNA]</scope>
    <source>
        <strain>cv. Nipponbare</strain>
    </source>
</reference>
<reference key="2">
    <citation type="journal article" date="2005" name="Nature">
        <title>The map-based sequence of the rice genome.</title>
        <authorList>
            <consortium name="International rice genome sequencing project (IRGSP)"/>
        </authorList>
    </citation>
    <scope>NUCLEOTIDE SEQUENCE [LARGE SCALE GENOMIC DNA]</scope>
    <source>
        <strain>cv. Nipponbare</strain>
    </source>
</reference>
<reference key="3">
    <citation type="journal article" date="2008" name="Nucleic Acids Res.">
        <title>The rice annotation project database (RAP-DB): 2008 update.</title>
        <authorList>
            <consortium name="The rice annotation project (RAP)"/>
        </authorList>
    </citation>
    <scope>GENOME REANNOTATION</scope>
    <source>
        <strain>cv. Nipponbare</strain>
    </source>
</reference>
<reference key="4">
    <citation type="journal article" date="2013" name="Rice">
        <title>Improvement of the Oryza sativa Nipponbare reference genome using next generation sequence and optical map data.</title>
        <authorList>
            <person name="Kawahara Y."/>
            <person name="de la Bastide M."/>
            <person name="Hamilton J.P."/>
            <person name="Kanamori H."/>
            <person name="McCombie W.R."/>
            <person name="Ouyang S."/>
            <person name="Schwartz D.C."/>
            <person name="Tanaka T."/>
            <person name="Wu J."/>
            <person name="Zhou S."/>
            <person name="Childs K.L."/>
            <person name="Davidson R.M."/>
            <person name="Lin H."/>
            <person name="Quesada-Ocampo L."/>
            <person name="Vaillancourt B."/>
            <person name="Sakai H."/>
            <person name="Lee S.S."/>
            <person name="Kim J."/>
            <person name="Numa H."/>
            <person name="Itoh T."/>
            <person name="Buell C.R."/>
            <person name="Matsumoto T."/>
        </authorList>
    </citation>
    <scope>GENOME REANNOTATION</scope>
    <source>
        <strain>cv. Nipponbare</strain>
    </source>
</reference>
<reference key="5">
    <citation type="journal article" date="2005" name="PLoS Biol.">
        <title>The genomes of Oryza sativa: a history of duplications.</title>
        <authorList>
            <person name="Yu J."/>
            <person name="Wang J."/>
            <person name="Lin W."/>
            <person name="Li S."/>
            <person name="Li H."/>
            <person name="Zhou J."/>
            <person name="Ni P."/>
            <person name="Dong W."/>
            <person name="Hu S."/>
            <person name="Zeng C."/>
            <person name="Zhang J."/>
            <person name="Zhang Y."/>
            <person name="Li R."/>
            <person name="Xu Z."/>
            <person name="Li S."/>
            <person name="Li X."/>
            <person name="Zheng H."/>
            <person name="Cong L."/>
            <person name="Lin L."/>
            <person name="Yin J."/>
            <person name="Geng J."/>
            <person name="Li G."/>
            <person name="Shi J."/>
            <person name="Liu J."/>
            <person name="Lv H."/>
            <person name="Li J."/>
            <person name="Wang J."/>
            <person name="Deng Y."/>
            <person name="Ran L."/>
            <person name="Shi X."/>
            <person name="Wang X."/>
            <person name="Wu Q."/>
            <person name="Li C."/>
            <person name="Ren X."/>
            <person name="Wang J."/>
            <person name="Wang X."/>
            <person name="Li D."/>
            <person name="Liu D."/>
            <person name="Zhang X."/>
            <person name="Ji Z."/>
            <person name="Zhao W."/>
            <person name="Sun Y."/>
            <person name="Zhang Z."/>
            <person name="Bao J."/>
            <person name="Han Y."/>
            <person name="Dong L."/>
            <person name="Ji J."/>
            <person name="Chen P."/>
            <person name="Wu S."/>
            <person name="Liu J."/>
            <person name="Xiao Y."/>
            <person name="Bu D."/>
            <person name="Tan J."/>
            <person name="Yang L."/>
            <person name="Ye C."/>
            <person name="Zhang J."/>
            <person name="Xu J."/>
            <person name="Zhou Y."/>
            <person name="Yu Y."/>
            <person name="Zhang B."/>
            <person name="Zhuang S."/>
            <person name="Wei H."/>
            <person name="Liu B."/>
            <person name="Lei M."/>
            <person name="Yu H."/>
            <person name="Li Y."/>
            <person name="Xu H."/>
            <person name="Wei S."/>
            <person name="He X."/>
            <person name="Fang L."/>
            <person name="Zhang Z."/>
            <person name="Zhang Y."/>
            <person name="Huang X."/>
            <person name="Su Z."/>
            <person name="Tong W."/>
            <person name="Li J."/>
            <person name="Tong Z."/>
            <person name="Li S."/>
            <person name="Ye J."/>
            <person name="Wang L."/>
            <person name="Fang L."/>
            <person name="Lei T."/>
            <person name="Chen C.-S."/>
            <person name="Chen H.-C."/>
            <person name="Xu Z."/>
            <person name="Li H."/>
            <person name="Huang H."/>
            <person name="Zhang F."/>
            <person name="Xu H."/>
            <person name="Li N."/>
            <person name="Zhao C."/>
            <person name="Li S."/>
            <person name="Dong L."/>
            <person name="Huang Y."/>
            <person name="Li L."/>
            <person name="Xi Y."/>
            <person name="Qi Q."/>
            <person name="Li W."/>
            <person name="Zhang B."/>
            <person name="Hu W."/>
            <person name="Zhang Y."/>
            <person name="Tian X."/>
            <person name="Jiao Y."/>
            <person name="Liang X."/>
            <person name="Jin J."/>
            <person name="Gao L."/>
            <person name="Zheng W."/>
            <person name="Hao B."/>
            <person name="Liu S.-M."/>
            <person name="Wang W."/>
            <person name="Yuan L."/>
            <person name="Cao M."/>
            <person name="McDermott J."/>
            <person name="Samudrala R."/>
            <person name="Wang J."/>
            <person name="Wong G.K.-S."/>
            <person name="Yang H."/>
        </authorList>
    </citation>
    <scope>NUCLEOTIDE SEQUENCE [LARGE SCALE GENOMIC DNA]</scope>
    <source>
        <strain>cv. Nipponbare</strain>
    </source>
</reference>
<reference key="6">
    <citation type="journal article" date="2003" name="Science">
        <title>Collection, mapping, and annotation of over 28,000 cDNA clones from japonica rice.</title>
        <authorList>
            <consortium name="The rice full-length cDNA consortium"/>
        </authorList>
    </citation>
    <scope>NUCLEOTIDE SEQUENCE [LARGE SCALE MRNA]</scope>
    <source>
        <strain>cv. Nipponbare</strain>
    </source>
</reference>
<evidence type="ECO:0000250" key="1"/>
<evidence type="ECO:0000305" key="2"/>
<evidence type="ECO:0000312" key="3">
    <source>
        <dbReference type="EMBL" id="EAZ14867.1"/>
    </source>
</evidence>
<proteinExistence type="evidence at transcript level"/>
<name>NQR2_ORYSJ</name>
<protein>
    <recommendedName>
        <fullName>Probable NADPH:quinone oxidoreductase 2</fullName>
        <ecNumber>1.6.5.2</ecNumber>
    </recommendedName>
</protein>
<comment type="function">
    <text evidence="1">The enzyme apparently serves as a quinone reductase in connection with conjugation reactions of hydroquinones involved in detoxification pathways.</text>
</comment>
<comment type="catalytic activity">
    <reaction>
        <text>a quinone + NADH + H(+) = a quinol + NAD(+)</text>
        <dbReference type="Rhea" id="RHEA:46160"/>
        <dbReference type="ChEBI" id="CHEBI:15378"/>
        <dbReference type="ChEBI" id="CHEBI:24646"/>
        <dbReference type="ChEBI" id="CHEBI:57540"/>
        <dbReference type="ChEBI" id="CHEBI:57945"/>
        <dbReference type="ChEBI" id="CHEBI:132124"/>
        <dbReference type="EC" id="1.6.5.2"/>
    </reaction>
</comment>
<comment type="catalytic activity">
    <reaction>
        <text>a quinone + NADPH + H(+) = a quinol + NADP(+)</text>
        <dbReference type="Rhea" id="RHEA:46164"/>
        <dbReference type="ChEBI" id="CHEBI:15378"/>
        <dbReference type="ChEBI" id="CHEBI:24646"/>
        <dbReference type="ChEBI" id="CHEBI:57783"/>
        <dbReference type="ChEBI" id="CHEBI:58349"/>
        <dbReference type="ChEBI" id="CHEBI:132124"/>
        <dbReference type="EC" id="1.6.5.2"/>
    </reaction>
</comment>
<comment type="cofactor">
    <cofactor evidence="1">
        <name>FMN</name>
        <dbReference type="ChEBI" id="CHEBI:58210"/>
    </cofactor>
</comment>
<comment type="subunit">
    <text evidence="1">Homotetramer.</text>
</comment>
<comment type="similarity">
    <text evidence="2">Belongs to the SsuE family.</text>
</comment>
<feature type="chain" id="PRO_0000160604" description="Probable NADPH:quinone oxidoreductase 2">
    <location>
        <begin position="1"/>
        <end position="203"/>
    </location>
</feature>
<accession>Q941Y8</accession>
<accession>Q0JFY4</accession>
<sequence>MEGSTSPKALRVAAISGSLRRGSANTGLIRAAKEICEESIPGMVIDHVDIPDLPLLNTDMEVDDGFPPAVEAFRASVRAADCFLFASPEYNYSISGPLKNALDWGSRPPNCWADRAAAIVSASGGSGGSRSMYHIRQVGVFLDIHFINKPEVFIKAHQPPKKFDSDGNLIDPEIKEELKDMLLSLQAFALRLQGKPANSKHAA</sequence>
<organism>
    <name type="scientific">Oryza sativa subsp. japonica</name>
    <name type="common">Rice</name>
    <dbReference type="NCBI Taxonomy" id="39947"/>
    <lineage>
        <taxon>Eukaryota</taxon>
        <taxon>Viridiplantae</taxon>
        <taxon>Streptophyta</taxon>
        <taxon>Embryophyta</taxon>
        <taxon>Tracheophyta</taxon>
        <taxon>Spermatophyta</taxon>
        <taxon>Magnoliopsida</taxon>
        <taxon>Liliopsida</taxon>
        <taxon>Poales</taxon>
        <taxon>Poaceae</taxon>
        <taxon>BOP clade</taxon>
        <taxon>Oryzoideae</taxon>
        <taxon>Oryzeae</taxon>
        <taxon>Oryzinae</taxon>
        <taxon>Oryza</taxon>
        <taxon>Oryza sativa</taxon>
    </lineage>
</organism>